<keyword id="KW-0963">Cytoplasm</keyword>
<keyword id="KW-0324">Glycolysis</keyword>
<keyword id="KW-0456">Lyase</keyword>
<keyword id="KW-0460">Magnesium</keyword>
<keyword id="KW-0479">Metal-binding</keyword>
<keyword id="KW-1185">Reference proteome</keyword>
<keyword id="KW-0964">Secreted</keyword>
<comment type="function">
    <text evidence="1">Catalyzes the reversible conversion of 2-phosphoglycerate (2-PG) into phosphoenolpyruvate (PEP). It is essential for the degradation of carbohydrates via glycolysis.</text>
</comment>
<comment type="catalytic activity">
    <reaction evidence="1">
        <text>(2R)-2-phosphoglycerate = phosphoenolpyruvate + H2O</text>
        <dbReference type="Rhea" id="RHEA:10164"/>
        <dbReference type="ChEBI" id="CHEBI:15377"/>
        <dbReference type="ChEBI" id="CHEBI:58289"/>
        <dbReference type="ChEBI" id="CHEBI:58702"/>
        <dbReference type="EC" id="4.2.1.11"/>
    </reaction>
</comment>
<comment type="cofactor">
    <cofactor evidence="1">
        <name>Mg(2+)</name>
        <dbReference type="ChEBI" id="CHEBI:18420"/>
    </cofactor>
    <text evidence="1">Binds a second Mg(2+) ion via substrate during catalysis.</text>
</comment>
<comment type="pathway">
    <text evidence="1">Carbohydrate degradation; glycolysis; pyruvate from D-glyceraldehyde 3-phosphate: step 4/5.</text>
</comment>
<comment type="subcellular location">
    <subcellularLocation>
        <location evidence="1">Cytoplasm</location>
    </subcellularLocation>
    <subcellularLocation>
        <location evidence="1">Secreted</location>
    </subcellularLocation>
    <subcellularLocation>
        <location evidence="1">Cell surface</location>
    </subcellularLocation>
    <text evidence="1">Fractions of enolase are present in both the cytoplasm and on the cell surface.</text>
</comment>
<comment type="similarity">
    <text evidence="1">Belongs to the enolase family.</text>
</comment>
<protein>
    <recommendedName>
        <fullName evidence="1">Enolase</fullName>
        <ecNumber evidence="1">4.2.1.11</ecNumber>
    </recommendedName>
    <alternativeName>
        <fullName evidence="1">2-phospho-D-glycerate hydro-lyase</fullName>
    </alternativeName>
    <alternativeName>
        <fullName evidence="1">2-phosphoglycerate dehydratase</fullName>
    </alternativeName>
</protein>
<feature type="chain" id="PRO_0000280861" description="Enolase">
    <location>
        <begin position="1"/>
        <end position="441"/>
    </location>
</feature>
<feature type="active site" description="Proton donor" evidence="1">
    <location>
        <position position="206"/>
    </location>
</feature>
<feature type="active site" description="Proton acceptor" evidence="1">
    <location>
        <position position="341"/>
    </location>
</feature>
<feature type="binding site" evidence="1">
    <location>
        <position position="164"/>
    </location>
    <ligand>
        <name>(2R)-2-phosphoglycerate</name>
        <dbReference type="ChEBI" id="CHEBI:58289"/>
    </ligand>
</feature>
<feature type="binding site" evidence="1">
    <location>
        <position position="243"/>
    </location>
    <ligand>
        <name>Mg(2+)</name>
        <dbReference type="ChEBI" id="CHEBI:18420"/>
    </ligand>
</feature>
<feature type="binding site" evidence="1">
    <location>
        <position position="289"/>
    </location>
    <ligand>
        <name>Mg(2+)</name>
        <dbReference type="ChEBI" id="CHEBI:18420"/>
    </ligand>
</feature>
<feature type="binding site" evidence="1">
    <location>
        <position position="316"/>
    </location>
    <ligand>
        <name>Mg(2+)</name>
        <dbReference type="ChEBI" id="CHEBI:18420"/>
    </ligand>
</feature>
<feature type="binding site" evidence="1">
    <location>
        <position position="341"/>
    </location>
    <ligand>
        <name>(2R)-2-phosphoglycerate</name>
        <dbReference type="ChEBI" id="CHEBI:58289"/>
    </ligand>
</feature>
<feature type="binding site" evidence="1">
    <location>
        <position position="370"/>
    </location>
    <ligand>
        <name>(2R)-2-phosphoglycerate</name>
        <dbReference type="ChEBI" id="CHEBI:58289"/>
    </ligand>
</feature>
<feature type="binding site" evidence="1">
    <location>
        <position position="371"/>
    </location>
    <ligand>
        <name>(2R)-2-phosphoglycerate</name>
        <dbReference type="ChEBI" id="CHEBI:58289"/>
    </ligand>
</feature>
<feature type="binding site" evidence="1">
    <location>
        <position position="392"/>
    </location>
    <ligand>
        <name>(2R)-2-phosphoglycerate</name>
        <dbReference type="ChEBI" id="CHEBI:58289"/>
    </ligand>
</feature>
<proteinExistence type="inferred from homology"/>
<organism>
    <name type="scientific">Leuconostoc mesenteroides subsp. mesenteroides (strain ATCC 8293 / DSM 20343 / BCRC 11652 / CCM 1803 / JCM 6124 / NCDO 523 / NBRC 100496 / NCIMB 8023 / NCTC 12954 / NRRL B-1118 / 37Y)</name>
    <dbReference type="NCBI Taxonomy" id="203120"/>
    <lineage>
        <taxon>Bacteria</taxon>
        <taxon>Bacillati</taxon>
        <taxon>Bacillota</taxon>
        <taxon>Bacilli</taxon>
        <taxon>Lactobacillales</taxon>
        <taxon>Lactobacillaceae</taxon>
        <taxon>Leuconostoc</taxon>
    </lineage>
</organism>
<accession>Q03ZK4</accession>
<dbReference type="EC" id="4.2.1.11" evidence="1"/>
<dbReference type="EMBL" id="CP000414">
    <property type="protein sequence ID" value="ABJ61368.1"/>
    <property type="molecule type" value="Genomic_DNA"/>
</dbReference>
<dbReference type="RefSeq" id="WP_011679148.1">
    <property type="nucleotide sequence ID" value="NC_008531.1"/>
</dbReference>
<dbReference type="SMR" id="Q03ZK4"/>
<dbReference type="EnsemblBacteria" id="ABJ61368">
    <property type="protein sequence ID" value="ABJ61368"/>
    <property type="gene ID" value="LEUM_0240"/>
</dbReference>
<dbReference type="GeneID" id="29577528"/>
<dbReference type="KEGG" id="lme:LEUM_0240"/>
<dbReference type="eggNOG" id="COG0148">
    <property type="taxonomic scope" value="Bacteria"/>
</dbReference>
<dbReference type="HOGENOM" id="CLU_031223_2_1_9"/>
<dbReference type="UniPathway" id="UPA00109">
    <property type="reaction ID" value="UER00187"/>
</dbReference>
<dbReference type="Proteomes" id="UP000000362">
    <property type="component" value="Chromosome"/>
</dbReference>
<dbReference type="GO" id="GO:0009986">
    <property type="term" value="C:cell surface"/>
    <property type="evidence" value="ECO:0007669"/>
    <property type="project" value="UniProtKB-SubCell"/>
</dbReference>
<dbReference type="GO" id="GO:0005576">
    <property type="term" value="C:extracellular region"/>
    <property type="evidence" value="ECO:0007669"/>
    <property type="project" value="UniProtKB-SubCell"/>
</dbReference>
<dbReference type="GO" id="GO:0000015">
    <property type="term" value="C:phosphopyruvate hydratase complex"/>
    <property type="evidence" value="ECO:0007669"/>
    <property type="project" value="InterPro"/>
</dbReference>
<dbReference type="GO" id="GO:0000287">
    <property type="term" value="F:magnesium ion binding"/>
    <property type="evidence" value="ECO:0007669"/>
    <property type="project" value="UniProtKB-UniRule"/>
</dbReference>
<dbReference type="GO" id="GO:0004634">
    <property type="term" value="F:phosphopyruvate hydratase activity"/>
    <property type="evidence" value="ECO:0007669"/>
    <property type="project" value="UniProtKB-UniRule"/>
</dbReference>
<dbReference type="GO" id="GO:0006096">
    <property type="term" value="P:glycolytic process"/>
    <property type="evidence" value="ECO:0007669"/>
    <property type="project" value="UniProtKB-UniRule"/>
</dbReference>
<dbReference type="CDD" id="cd03313">
    <property type="entry name" value="enolase"/>
    <property type="match status" value="1"/>
</dbReference>
<dbReference type="FunFam" id="3.20.20.120:FF:000001">
    <property type="entry name" value="Enolase"/>
    <property type="match status" value="1"/>
</dbReference>
<dbReference type="FunFam" id="3.30.390.10:FF:000001">
    <property type="entry name" value="Enolase"/>
    <property type="match status" value="1"/>
</dbReference>
<dbReference type="Gene3D" id="3.20.20.120">
    <property type="entry name" value="Enolase-like C-terminal domain"/>
    <property type="match status" value="1"/>
</dbReference>
<dbReference type="Gene3D" id="3.30.390.10">
    <property type="entry name" value="Enolase-like, N-terminal domain"/>
    <property type="match status" value="1"/>
</dbReference>
<dbReference type="HAMAP" id="MF_00318">
    <property type="entry name" value="Enolase"/>
    <property type="match status" value="1"/>
</dbReference>
<dbReference type="InterPro" id="IPR000941">
    <property type="entry name" value="Enolase"/>
</dbReference>
<dbReference type="InterPro" id="IPR036849">
    <property type="entry name" value="Enolase-like_C_sf"/>
</dbReference>
<dbReference type="InterPro" id="IPR029017">
    <property type="entry name" value="Enolase-like_N"/>
</dbReference>
<dbReference type="InterPro" id="IPR020810">
    <property type="entry name" value="Enolase_C"/>
</dbReference>
<dbReference type="InterPro" id="IPR020809">
    <property type="entry name" value="Enolase_CS"/>
</dbReference>
<dbReference type="InterPro" id="IPR020811">
    <property type="entry name" value="Enolase_N"/>
</dbReference>
<dbReference type="NCBIfam" id="TIGR01060">
    <property type="entry name" value="eno"/>
    <property type="match status" value="1"/>
</dbReference>
<dbReference type="PANTHER" id="PTHR11902">
    <property type="entry name" value="ENOLASE"/>
    <property type="match status" value="1"/>
</dbReference>
<dbReference type="PANTHER" id="PTHR11902:SF1">
    <property type="entry name" value="ENOLASE"/>
    <property type="match status" value="1"/>
</dbReference>
<dbReference type="Pfam" id="PF00113">
    <property type="entry name" value="Enolase_C"/>
    <property type="match status" value="1"/>
</dbReference>
<dbReference type="Pfam" id="PF03952">
    <property type="entry name" value="Enolase_N"/>
    <property type="match status" value="1"/>
</dbReference>
<dbReference type="PIRSF" id="PIRSF001400">
    <property type="entry name" value="Enolase"/>
    <property type="match status" value="1"/>
</dbReference>
<dbReference type="PRINTS" id="PR00148">
    <property type="entry name" value="ENOLASE"/>
</dbReference>
<dbReference type="SFLD" id="SFLDF00002">
    <property type="entry name" value="enolase"/>
    <property type="match status" value="1"/>
</dbReference>
<dbReference type="SFLD" id="SFLDG00178">
    <property type="entry name" value="enolase"/>
    <property type="match status" value="1"/>
</dbReference>
<dbReference type="SMART" id="SM01192">
    <property type="entry name" value="Enolase_C"/>
    <property type="match status" value="1"/>
</dbReference>
<dbReference type="SMART" id="SM01193">
    <property type="entry name" value="Enolase_N"/>
    <property type="match status" value="1"/>
</dbReference>
<dbReference type="SUPFAM" id="SSF51604">
    <property type="entry name" value="Enolase C-terminal domain-like"/>
    <property type="match status" value="1"/>
</dbReference>
<dbReference type="SUPFAM" id="SSF54826">
    <property type="entry name" value="Enolase N-terminal domain-like"/>
    <property type="match status" value="1"/>
</dbReference>
<dbReference type="PROSITE" id="PS00164">
    <property type="entry name" value="ENOLASE"/>
    <property type="match status" value="1"/>
</dbReference>
<evidence type="ECO:0000255" key="1">
    <source>
        <dbReference type="HAMAP-Rule" id="MF_00318"/>
    </source>
</evidence>
<name>ENO_LEUMM</name>
<reference key="1">
    <citation type="journal article" date="2006" name="Proc. Natl. Acad. Sci. U.S.A.">
        <title>Comparative genomics of the lactic acid bacteria.</title>
        <authorList>
            <person name="Makarova K.S."/>
            <person name="Slesarev A."/>
            <person name="Wolf Y.I."/>
            <person name="Sorokin A."/>
            <person name="Mirkin B."/>
            <person name="Koonin E.V."/>
            <person name="Pavlov A."/>
            <person name="Pavlova N."/>
            <person name="Karamychev V."/>
            <person name="Polouchine N."/>
            <person name="Shakhova V."/>
            <person name="Grigoriev I."/>
            <person name="Lou Y."/>
            <person name="Rohksar D."/>
            <person name="Lucas S."/>
            <person name="Huang K."/>
            <person name="Goodstein D.M."/>
            <person name="Hawkins T."/>
            <person name="Plengvidhya V."/>
            <person name="Welker D."/>
            <person name="Hughes J."/>
            <person name="Goh Y."/>
            <person name="Benson A."/>
            <person name="Baldwin K."/>
            <person name="Lee J.-H."/>
            <person name="Diaz-Muniz I."/>
            <person name="Dosti B."/>
            <person name="Smeianov V."/>
            <person name="Wechter W."/>
            <person name="Barabote R."/>
            <person name="Lorca G."/>
            <person name="Altermann E."/>
            <person name="Barrangou R."/>
            <person name="Ganesan B."/>
            <person name="Xie Y."/>
            <person name="Rawsthorne H."/>
            <person name="Tamir D."/>
            <person name="Parker C."/>
            <person name="Breidt F."/>
            <person name="Broadbent J.R."/>
            <person name="Hutkins R."/>
            <person name="O'Sullivan D."/>
            <person name="Steele J."/>
            <person name="Unlu G."/>
            <person name="Saier M.H. Jr."/>
            <person name="Klaenhammer T."/>
            <person name="Richardson P."/>
            <person name="Kozyavkin S."/>
            <person name="Weimer B.C."/>
            <person name="Mills D.A."/>
        </authorList>
    </citation>
    <scope>NUCLEOTIDE SEQUENCE [LARGE SCALE GENOMIC DNA]</scope>
    <source>
        <strain>ATCC 8293 / DSM 20343 / BCRC 11652 / CCM 1803 / JCM 6124 / NCDO 523 / NBRC 100496 / NCIMB 8023 / NCTC 12954 / NRRL B-1118 / 37Y</strain>
    </source>
</reference>
<gene>
    <name evidence="1" type="primary">eno</name>
    <name type="ordered locus">LEUM_0240</name>
</gene>
<sequence length="441" mass="47540">MSLITDIIAREVLDSRGNPTLEAEVITELGGFGRGMVPSGASTGEHEAVELRDGDKSRFGGKGTTKAVANVNDAIAKALVGKFDVTDQRAIDQAMIELDGTENKGNLGANAILAVSIAAARAAADELGVPLFSYLGGANSYVLPTPMMNVINGGAHSANKVDFQEFMIMPVGAPTVKEAIRYGSETFHALKKLLEADGKATSVGDEGGFAPDFADNEEPLKYLIRAIEAAGYKPGKDIAIAVDVASSELYDAETKTYKLRWSTGEEFTTPEFIKYLEDLADRYPIISIEDPIDENEWEDWAAITAELGKKVQLVGDDFFVTNTQYLEKGINMGAANSILIKVNQIGTLTETFEAIEMAKEAGYTAIVSHRSGETEDTTISDLVVATNAGQIKTGSLSRTDRIAKYNQLIRIEELLDTTAKYKGIHSFYNLSAAAREVIENK</sequence>